<evidence type="ECO:0000255" key="1">
    <source>
        <dbReference type="HAMAP-Rule" id="MF_01346"/>
    </source>
</evidence>
<reference key="1">
    <citation type="journal article" date="2001" name="Nucleic Acids Res.">
        <title>The complete genome sequence of the murine respiratory pathogen Mycoplasma pulmonis.</title>
        <authorList>
            <person name="Chambaud I."/>
            <person name="Heilig R."/>
            <person name="Ferris S."/>
            <person name="Barbe V."/>
            <person name="Samson D."/>
            <person name="Galisson F."/>
            <person name="Moszer I."/>
            <person name="Dybvig K."/>
            <person name="Wroblewski H."/>
            <person name="Viari A."/>
            <person name="Rocha E.P.C."/>
            <person name="Blanchard A."/>
        </authorList>
    </citation>
    <scope>NUCLEOTIDE SEQUENCE [LARGE SCALE GENOMIC DNA]</scope>
    <source>
        <strain>UAB CTIP</strain>
    </source>
</reference>
<name>ATPA1_MYCPU</name>
<dbReference type="EC" id="7.1.2.2" evidence="1"/>
<dbReference type="EMBL" id="AL445563">
    <property type="protein sequence ID" value="CAC13441.1"/>
    <property type="molecule type" value="Genomic_DNA"/>
</dbReference>
<dbReference type="PIR" id="D90545">
    <property type="entry name" value="D90545"/>
</dbReference>
<dbReference type="RefSeq" id="WP_010925072.1">
    <property type="nucleotide sequence ID" value="NC_002771.1"/>
</dbReference>
<dbReference type="SMR" id="Q98QU3"/>
<dbReference type="STRING" id="272635.gene:17576858"/>
<dbReference type="KEGG" id="mpu:MYPU_2680"/>
<dbReference type="eggNOG" id="COG0056">
    <property type="taxonomic scope" value="Bacteria"/>
</dbReference>
<dbReference type="HOGENOM" id="CLU_010091_2_1_14"/>
<dbReference type="BioCyc" id="MPUL272635:G1GT6-269-MONOMER"/>
<dbReference type="Proteomes" id="UP000000528">
    <property type="component" value="Chromosome"/>
</dbReference>
<dbReference type="GO" id="GO:0005886">
    <property type="term" value="C:plasma membrane"/>
    <property type="evidence" value="ECO:0007669"/>
    <property type="project" value="UniProtKB-SubCell"/>
</dbReference>
<dbReference type="GO" id="GO:0045259">
    <property type="term" value="C:proton-transporting ATP synthase complex"/>
    <property type="evidence" value="ECO:0007669"/>
    <property type="project" value="UniProtKB-KW"/>
</dbReference>
<dbReference type="GO" id="GO:0043531">
    <property type="term" value="F:ADP binding"/>
    <property type="evidence" value="ECO:0007669"/>
    <property type="project" value="TreeGrafter"/>
</dbReference>
<dbReference type="GO" id="GO:0005524">
    <property type="term" value="F:ATP binding"/>
    <property type="evidence" value="ECO:0007669"/>
    <property type="project" value="UniProtKB-UniRule"/>
</dbReference>
<dbReference type="GO" id="GO:0046933">
    <property type="term" value="F:proton-transporting ATP synthase activity, rotational mechanism"/>
    <property type="evidence" value="ECO:0007669"/>
    <property type="project" value="UniProtKB-UniRule"/>
</dbReference>
<dbReference type="CDD" id="cd18113">
    <property type="entry name" value="ATP-synt_F1_alpha_C"/>
    <property type="match status" value="1"/>
</dbReference>
<dbReference type="CDD" id="cd18116">
    <property type="entry name" value="ATP-synt_F1_alpha_N"/>
    <property type="match status" value="1"/>
</dbReference>
<dbReference type="CDD" id="cd01132">
    <property type="entry name" value="F1-ATPase_alpha_CD"/>
    <property type="match status" value="1"/>
</dbReference>
<dbReference type="FunFam" id="3.40.50.300:FF:000002">
    <property type="entry name" value="ATP synthase subunit alpha"/>
    <property type="match status" value="1"/>
</dbReference>
<dbReference type="Gene3D" id="2.40.30.20">
    <property type="match status" value="1"/>
</dbReference>
<dbReference type="Gene3D" id="1.20.150.20">
    <property type="entry name" value="ATP synthase alpha/beta chain, C-terminal domain"/>
    <property type="match status" value="1"/>
</dbReference>
<dbReference type="Gene3D" id="3.40.50.300">
    <property type="entry name" value="P-loop containing nucleotide triphosphate hydrolases"/>
    <property type="match status" value="1"/>
</dbReference>
<dbReference type="HAMAP" id="MF_01346">
    <property type="entry name" value="ATP_synth_alpha_bact"/>
    <property type="match status" value="1"/>
</dbReference>
<dbReference type="InterPro" id="IPR023366">
    <property type="entry name" value="ATP_synth_asu-like_sf"/>
</dbReference>
<dbReference type="InterPro" id="IPR000793">
    <property type="entry name" value="ATP_synth_asu_C"/>
</dbReference>
<dbReference type="InterPro" id="IPR038376">
    <property type="entry name" value="ATP_synth_asu_C_sf"/>
</dbReference>
<dbReference type="InterPro" id="IPR033732">
    <property type="entry name" value="ATP_synth_F1_a_nt-bd_dom"/>
</dbReference>
<dbReference type="InterPro" id="IPR005294">
    <property type="entry name" value="ATP_synth_F1_asu"/>
</dbReference>
<dbReference type="InterPro" id="IPR020003">
    <property type="entry name" value="ATPase_a/bsu_AS"/>
</dbReference>
<dbReference type="InterPro" id="IPR004100">
    <property type="entry name" value="ATPase_F1/V1/A1_a/bsu_N"/>
</dbReference>
<dbReference type="InterPro" id="IPR036121">
    <property type="entry name" value="ATPase_F1/V1/A1_a/bsu_N_sf"/>
</dbReference>
<dbReference type="InterPro" id="IPR000194">
    <property type="entry name" value="ATPase_F1/V1/A1_a/bsu_nucl-bd"/>
</dbReference>
<dbReference type="InterPro" id="IPR027417">
    <property type="entry name" value="P-loop_NTPase"/>
</dbReference>
<dbReference type="NCBIfam" id="TIGR00962">
    <property type="entry name" value="atpA"/>
    <property type="match status" value="1"/>
</dbReference>
<dbReference type="NCBIfam" id="NF009884">
    <property type="entry name" value="PRK13343.1"/>
    <property type="match status" value="1"/>
</dbReference>
<dbReference type="PANTHER" id="PTHR48082">
    <property type="entry name" value="ATP SYNTHASE SUBUNIT ALPHA, MITOCHONDRIAL"/>
    <property type="match status" value="1"/>
</dbReference>
<dbReference type="PANTHER" id="PTHR48082:SF2">
    <property type="entry name" value="ATP SYNTHASE SUBUNIT ALPHA, MITOCHONDRIAL"/>
    <property type="match status" value="1"/>
</dbReference>
<dbReference type="Pfam" id="PF00006">
    <property type="entry name" value="ATP-synt_ab"/>
    <property type="match status" value="1"/>
</dbReference>
<dbReference type="Pfam" id="PF00306">
    <property type="entry name" value="ATP-synt_ab_C"/>
    <property type="match status" value="1"/>
</dbReference>
<dbReference type="Pfam" id="PF02874">
    <property type="entry name" value="ATP-synt_ab_N"/>
    <property type="match status" value="1"/>
</dbReference>
<dbReference type="SUPFAM" id="SSF47917">
    <property type="entry name" value="C-terminal domain of alpha and beta subunits of F1 ATP synthase"/>
    <property type="match status" value="1"/>
</dbReference>
<dbReference type="SUPFAM" id="SSF50615">
    <property type="entry name" value="N-terminal domain of alpha and beta subunits of F1 ATP synthase"/>
    <property type="match status" value="1"/>
</dbReference>
<dbReference type="SUPFAM" id="SSF52540">
    <property type="entry name" value="P-loop containing nucleoside triphosphate hydrolases"/>
    <property type="match status" value="1"/>
</dbReference>
<dbReference type="PROSITE" id="PS00152">
    <property type="entry name" value="ATPASE_ALPHA_BETA"/>
    <property type="match status" value="1"/>
</dbReference>
<feature type="chain" id="PRO_0000238297" description="ATP synthase subunit alpha 1">
    <location>
        <begin position="1"/>
        <end position="528"/>
    </location>
</feature>
<feature type="binding site" evidence="1">
    <location>
        <begin position="169"/>
        <end position="176"/>
    </location>
    <ligand>
        <name>ATP</name>
        <dbReference type="ChEBI" id="CHEBI:30616"/>
    </ligand>
</feature>
<feature type="site" description="Required for activity" evidence="1">
    <location>
        <position position="362"/>
    </location>
</feature>
<sequence>MALKNKDISSIIKERIRNYKIEKINDEVGKVISIGDGIALVSGLKNVKNGELIIFNESVYGLTLNLEIDYIGVAILGNDTLLKEGDEAKRTFEVISIKVGPEILGRVINALGEPIDGKGEIDSEIHRQIFRVAPGVMARESVNEALSTGILAIDSMIPIGKGQRELIIGDRQTGKTAIAIDAIINQKGKNVKCIYVAIGQKNSTVAQIVRKLENHGAMEYTSVVSASASELSPMQYLAPYTGVTIAEEFMETGQDVLIVYDDLSKHAVAYRTLSLLLRRPPGREAYPGDVFYLHSQLLERAAKVNKENGGGSITALPIIETQQGDISAYIATNVISITDGQIFTKESLFNSGQRPAIDVGFSVSRVGSSAQISAMKEVTSSLKLQLAQYNEMLAFSQFGSDLDDSTKAILENGSKIYEILKQDQYSPIDQYTQVILFLAIKQNLINPIPLEYISKFKKAIIHKFNKDAKALNLKTLIRNDKKLSTKLRNEITKIIIEEIKNITKSIANYNPKDHRPIPEEYAKLVESK</sequence>
<keyword id="KW-0066">ATP synthesis</keyword>
<keyword id="KW-0067">ATP-binding</keyword>
<keyword id="KW-1003">Cell membrane</keyword>
<keyword id="KW-0139">CF(1)</keyword>
<keyword id="KW-0375">Hydrogen ion transport</keyword>
<keyword id="KW-0406">Ion transport</keyword>
<keyword id="KW-0472">Membrane</keyword>
<keyword id="KW-0547">Nucleotide-binding</keyword>
<keyword id="KW-1185">Reference proteome</keyword>
<keyword id="KW-1278">Translocase</keyword>
<keyword id="KW-0813">Transport</keyword>
<protein>
    <recommendedName>
        <fullName evidence="1">ATP synthase subunit alpha 1</fullName>
        <ecNumber evidence="1">7.1.2.2</ecNumber>
    </recommendedName>
    <alternativeName>
        <fullName evidence="1">ATP synthase F1 sector subunit alpha 1</fullName>
    </alternativeName>
    <alternativeName>
        <fullName evidence="1">F-ATPase subunit alpha 1</fullName>
    </alternativeName>
</protein>
<accession>Q98QU3</accession>
<proteinExistence type="inferred from homology"/>
<organism>
    <name type="scientific">Mycoplasmopsis pulmonis (strain UAB CTIP)</name>
    <name type="common">Mycoplasma pulmonis</name>
    <dbReference type="NCBI Taxonomy" id="272635"/>
    <lineage>
        <taxon>Bacteria</taxon>
        <taxon>Bacillati</taxon>
        <taxon>Mycoplasmatota</taxon>
        <taxon>Mycoplasmoidales</taxon>
        <taxon>Metamycoplasmataceae</taxon>
        <taxon>Mycoplasmopsis</taxon>
    </lineage>
</organism>
<gene>
    <name evidence="1" type="primary">atpA1</name>
    <name type="ordered locus">MYPU_2680</name>
</gene>
<comment type="function">
    <text evidence="1">Produces ATP from ADP in the presence of a proton gradient across the membrane. The alpha chain is a regulatory subunit.</text>
</comment>
<comment type="catalytic activity">
    <reaction evidence="1">
        <text>ATP + H2O + 4 H(+)(in) = ADP + phosphate + 5 H(+)(out)</text>
        <dbReference type="Rhea" id="RHEA:57720"/>
        <dbReference type="ChEBI" id="CHEBI:15377"/>
        <dbReference type="ChEBI" id="CHEBI:15378"/>
        <dbReference type="ChEBI" id="CHEBI:30616"/>
        <dbReference type="ChEBI" id="CHEBI:43474"/>
        <dbReference type="ChEBI" id="CHEBI:456216"/>
        <dbReference type="EC" id="7.1.2.2"/>
    </reaction>
</comment>
<comment type="subunit">
    <text evidence="1">F-type ATPases have 2 components, CF(1) - the catalytic core - and CF(0) - the membrane proton channel. CF(1) has five subunits: alpha(3), beta(3), gamma(1), delta(1), epsilon(1). CF(0) has three main subunits: a(1), b(2) and c(9-12). The alpha and beta chains form an alternating ring which encloses part of the gamma chain. CF(1) is attached to CF(0) by a central stalk formed by the gamma and epsilon chains, while a peripheral stalk is formed by the delta and b chains.</text>
</comment>
<comment type="subcellular location">
    <subcellularLocation>
        <location evidence="1">Cell membrane</location>
        <topology evidence="1">Peripheral membrane protein</topology>
    </subcellularLocation>
</comment>
<comment type="similarity">
    <text evidence="1">Belongs to the ATPase alpha/beta chains family.</text>
</comment>